<gene>
    <name evidence="1" type="primary">ycf2-A</name>
</gene>
<gene>
    <name evidence="1" type="primary">ycf2-B</name>
</gene>
<keyword id="KW-0067">ATP-binding</keyword>
<keyword id="KW-0150">Chloroplast</keyword>
<keyword id="KW-0547">Nucleotide-binding</keyword>
<keyword id="KW-0934">Plastid</keyword>
<proteinExistence type="inferred from homology"/>
<geneLocation type="chloroplast"/>
<evidence type="ECO:0000255" key="1">
    <source>
        <dbReference type="HAMAP-Rule" id="MF_01330"/>
    </source>
</evidence>
<feature type="chain" id="PRO_0000223059" description="Protein Ycf2">
    <location>
        <begin position="1"/>
        <end position="2253"/>
    </location>
</feature>
<feature type="binding site" evidence="1">
    <location>
        <begin position="1600"/>
        <end position="1607"/>
    </location>
    <ligand>
        <name>ATP</name>
        <dbReference type="ChEBI" id="CHEBI:30616"/>
    </ligand>
</feature>
<name>YCF2_NYMAL</name>
<accession>Q6EVY7</accession>
<protein>
    <recommendedName>
        <fullName evidence="1">Protein Ycf2</fullName>
    </recommendedName>
</protein>
<reference key="1">
    <citation type="journal article" date="2004" name="Mol. Biol. Evol.">
        <title>The chloroplast genome of Nymphaea alba: whole-genome analyses and the problem of identifying the most basal angiosperm.</title>
        <authorList>
            <person name="Goremykin V.V."/>
            <person name="Hirsch-Ernst K.I."/>
            <person name="Woelfl S."/>
            <person name="Hellwig F.H."/>
        </authorList>
    </citation>
    <scope>NUCLEOTIDE SEQUENCE [LARGE SCALE GENOMIC DNA]</scope>
</reference>
<dbReference type="EMBL" id="AJ627251">
    <property type="protein sequence ID" value="CAF28638.1"/>
    <property type="molecule type" value="Genomic_DNA"/>
</dbReference>
<dbReference type="EMBL" id="AJ627251">
    <property type="protein sequence ID" value="CAF28659.1"/>
    <property type="molecule type" value="Genomic_DNA"/>
</dbReference>
<dbReference type="GO" id="GO:0009570">
    <property type="term" value="C:chloroplast stroma"/>
    <property type="evidence" value="ECO:0007669"/>
    <property type="project" value="UniProtKB-SubCell"/>
</dbReference>
<dbReference type="GO" id="GO:0005524">
    <property type="term" value="F:ATP binding"/>
    <property type="evidence" value="ECO:0007669"/>
    <property type="project" value="UniProtKB-KW"/>
</dbReference>
<dbReference type="GO" id="GO:0016887">
    <property type="term" value="F:ATP hydrolysis activity"/>
    <property type="evidence" value="ECO:0007669"/>
    <property type="project" value="InterPro"/>
</dbReference>
<dbReference type="CDD" id="cd19505">
    <property type="entry name" value="RecA-like_Ycf2"/>
    <property type="match status" value="1"/>
</dbReference>
<dbReference type="Gene3D" id="3.40.50.300">
    <property type="entry name" value="P-loop containing nucleotide triphosphate hydrolases"/>
    <property type="match status" value="1"/>
</dbReference>
<dbReference type="HAMAP" id="MF_01330">
    <property type="entry name" value="Ycf2"/>
    <property type="match status" value="1"/>
</dbReference>
<dbReference type="InterPro" id="IPR003959">
    <property type="entry name" value="ATPase_AAA_core"/>
</dbReference>
<dbReference type="InterPro" id="IPR027417">
    <property type="entry name" value="P-loop_NTPase"/>
</dbReference>
<dbReference type="InterPro" id="IPR008543">
    <property type="entry name" value="Uncharacterised_Ycf2"/>
</dbReference>
<dbReference type="InterPro" id="IPR056777">
    <property type="entry name" value="Ycf2_N"/>
</dbReference>
<dbReference type="PANTHER" id="PTHR33078:SF51">
    <property type="entry name" value="PROTEIN TIC 214"/>
    <property type="match status" value="1"/>
</dbReference>
<dbReference type="PANTHER" id="PTHR33078">
    <property type="entry name" value="PROTEIN YCF2-RELATED"/>
    <property type="match status" value="1"/>
</dbReference>
<dbReference type="Pfam" id="PF00004">
    <property type="entry name" value="AAA"/>
    <property type="match status" value="1"/>
</dbReference>
<dbReference type="Pfam" id="PF05695">
    <property type="entry name" value="Ycf2"/>
    <property type="match status" value="2"/>
</dbReference>
<dbReference type="SUPFAM" id="SSF52540">
    <property type="entry name" value="P-loop containing nucleoside triphosphate hydrolases"/>
    <property type="match status" value="1"/>
</dbReference>
<sequence length="2253" mass="264739">MKRHQFKSCIFELREILREIKNSRYFLDSWTKFDSVVSFTHIFFHQERFVKLLGPQTWSVLLSRDSQGSTSNRYFTIKGVVLLVVAVLIYRINNRNMVERKNLYLMGLLPIPMNSIGPRNDTLEESFWSPNINRLIVSLLYLPKGKKISESCFMDPKESTWVLPITQKCIMPESNWGSRWWRNWIGKKRDSSCKISNETVAGIEISFKEKDIKYLEFLFVSYMDDPIRKDHGWELFDRVSPRKKRNIINLNSGQLFEILAKHLICYLMSAFREKRPIEVEGFLKQQGAEATIPSNDIEHVSHLFSRNKWDISLQNCAQFHMWQFHQDLFVSWGKNQHESDFLRNVSRENLIWLDNMWLVNKDRFFSKVRNVSSNIQYDSTRSIFVQVTDSSQLKGSSDQSRENFDSISNEDSEYHTLINQTEIQQLKERLILWDPSSLQTERTEIESDRFPKYPSGYSSMSRLFTEREKQMNNHLFPEKIEEFLGNPTRSIRSFFSDRWSELHLVSNATERFTRDQKLLKKQQDVFSFVPSRRSEKKEMVDIFKIITYLQNTVSIHPISSDRGCDMVPKDEPDMDSSNKISFLNKNPFCDLFHLFHDRNKGRYTLHHDFESEERFQEMADLFTLSITEPDLVYHKGFAFSIDSYGLDQKKFLNEVFNSRDESKKNSLLVLPHIFYEENESFYRRIRKKWVRISCRNGLEDPKPKIVVFASNNIMEAVNQYRLIRNLIQIQYSTYGYIRNLSNRFFLMNRSDRNFEYGIQRDQIGNDTLNHITIMKYMINQHLLNVKKSQKKWFDPLISRTERSMNRDPNAYRYKWSNGSKNFQEHLEHFVSEQKNRFQVVFDRLRINQHSIDWSKVIDKQDLSKSLHFFLSKSLLFLSKSLTFFFVSIGNIPIHRSEIHIYELKGPNDQLCNQLLESIGVQIVHLNKLKPFLLDDHDTSQRSKFLINGGTISAFLFNKIPKWMIDSLHTRNNRRKFFDNTDSYFSMISHDRDNWLNPVKPFHRSSLISSFYKANLLRFLNNPHHFCFYSNKRFPFYAEKTRIDNYDLTYGQFLHISFIRNKIFSLCVGKKKHVFLERDTISPIESQVSDIFIPNDFPQSGDETYNLYKSQPLSTYCQPLSDMNLSDSEGKNLHQYLSFNSNMGLIHTPCSEKDLPSAKKRNLCLKKCVEKRQMYRAFQRDSAFSNLSKWNLFQTYMPWFLTSAGCKYINFILLDTFSDPLPILSSSHQFVSFFYDIMHGSDISWSILQIPLWAILPRWNLISEISSKCLQNILLPEEMIHRNNESPVPLKWTHLRSPNAREFLYSILFLLLVAGYLVRTHLLFISRVSSELQTELEKIKSLMIPSYMIELRKLLDRYPPPELNSFWLKNLFLVALEQLGDSLEEIRSSASGGNMLLSGGPTYGVKSIRSKKKDLNINLIDIIYLISIIPNPINSITFSRNTRHLSRTSKEIYSLIRKNVNSDWIDDQIESWVANSDLIDDEEREFLVQFSTLTTEKRIDQILLSLTHSDHLSKNDSGYQMIEQPGSIYLRYLVDIQKRYLMNYEFNRSCLAERRIFLAHYQTITYSQTPCGANSSHFPSHGKPFSLRLALPPSRGILVIGFIGTGRSYFVKYRVTNSYVPFITVFPNKFLDDNKGYLIDDIDIDDRDDIDIDDRDDDDLDTELLTMPNVLTMYMTPKIDQFEITLPLELAKAMSPCIIWIPNIHDLYVNESNYLSLGLLVNHLPRDCERCSTRNILVIASTHIPQKVDPALIAPNKSNTCIKIRRLLIPQQRKHFFILSYTRGFRLEKKMSHTNGFGSITMGSNARDLVALTNEVLSISITQKKSIIDTNTIRSALHRQTWDLRSQVRSVQYHEILFYQIGRAVAQNVLLSNCSIDPISIYMKKKSCKEGDSYLSKWYFELGTSMKKLTILLYLLSCSAGSVAQDLWSPPGPDEQNWITSYGFVENDSDLVHGLLESALVGYSRTECSQFDNDRVTLLLRSEPRNQLDMMQNGSCSIVDQRFLYEKYESGFEEGEGEGTLDLQQIEEDEDLFNHIVWAPRLWRPHGNLFDCIERPKKLGFPYWVRSFRDKRIIYHKEDKLQENDSEFLRSGTVQYQTRDRSSKEQGFFRISQFIWDPADQFFFLFKDQPFVSVFSRRESFADEEMSKGLITSQTNSPTSIYKRWLIKNTQEKHFELLIHRQRWLRTNTNSSLSNGSFRSNTLSESYQYLSNLFLSNNGTLLDQMTKTLLRKRWLFPDEMKHLIHAPGERFPIP</sequence>
<comment type="function">
    <text>Probable ATPase of unknown function. Its presence in a non-photosynthetic plant (Epifagus virginiana) and experiments in tobacco indicate that it has an essential function which is probably not related to photosynthesis.</text>
</comment>
<comment type="subcellular location">
    <subcellularLocation>
        <location evidence="1">Plastid</location>
        <location evidence="1">Chloroplast stroma</location>
    </subcellularLocation>
</comment>
<comment type="similarity">
    <text evidence="1">Belongs to the Ycf2 family.</text>
</comment>
<organism>
    <name type="scientific">Nymphaea alba</name>
    <name type="common">White water-lily</name>
    <name type="synonym">Castalia alba</name>
    <dbReference type="NCBI Taxonomy" id="34301"/>
    <lineage>
        <taxon>Eukaryota</taxon>
        <taxon>Viridiplantae</taxon>
        <taxon>Streptophyta</taxon>
        <taxon>Embryophyta</taxon>
        <taxon>Tracheophyta</taxon>
        <taxon>Spermatophyta</taxon>
        <taxon>Magnoliopsida</taxon>
        <taxon>Nymphaeales</taxon>
        <taxon>Nymphaeaceae</taxon>
        <taxon>Nymphaea</taxon>
    </lineage>
</organism>